<organism>
    <name type="scientific">Macaca fascicularis</name>
    <name type="common">Crab-eating macaque</name>
    <name type="synonym">Cynomolgus monkey</name>
    <dbReference type="NCBI Taxonomy" id="9541"/>
    <lineage>
        <taxon>Eukaryota</taxon>
        <taxon>Metazoa</taxon>
        <taxon>Chordata</taxon>
        <taxon>Craniata</taxon>
        <taxon>Vertebrata</taxon>
        <taxon>Euteleostomi</taxon>
        <taxon>Mammalia</taxon>
        <taxon>Eutheria</taxon>
        <taxon>Euarchontoglires</taxon>
        <taxon>Primates</taxon>
        <taxon>Haplorrhini</taxon>
        <taxon>Catarrhini</taxon>
        <taxon>Cercopithecidae</taxon>
        <taxon>Cercopithecinae</taxon>
        <taxon>Macaca</taxon>
    </lineage>
</organism>
<keyword id="KW-0007">Acetylation</keyword>
<keyword id="KW-1064">Adaptive immunity</keyword>
<keyword id="KW-0013">ADP-ribosylation</keyword>
<keyword id="KW-0072">Autophagy</keyword>
<keyword id="KW-1003">Cell membrane</keyword>
<keyword id="KW-0145">Chemotaxis</keyword>
<keyword id="KW-0158">Chromosome</keyword>
<keyword id="KW-0963">Cytoplasm</keyword>
<keyword id="KW-1015">Disulfide bond</keyword>
<keyword id="KW-0227">DNA damage</keyword>
<keyword id="KW-0233">DNA recombination</keyword>
<keyword id="KW-0234">DNA repair</keyword>
<keyword id="KW-0238">DNA-binding</keyword>
<keyword id="KW-0967">Endosome</keyword>
<keyword id="KW-0391">Immunity</keyword>
<keyword id="KW-0395">Inflammatory response</keyword>
<keyword id="KW-0399">Innate immunity</keyword>
<keyword id="KW-1017">Isopeptide bond</keyword>
<keyword id="KW-0472">Membrane</keyword>
<keyword id="KW-0539">Nucleus</keyword>
<keyword id="KW-0558">Oxidation</keyword>
<keyword id="KW-0597">Phosphoprotein</keyword>
<keyword id="KW-1185">Reference proteome</keyword>
<keyword id="KW-0677">Repeat</keyword>
<keyword id="KW-0964">Secreted</keyword>
<reference key="1">
    <citation type="submission" date="2005-06" db="EMBL/GenBank/DDBJ databases">
        <title>DNA sequences of macaque genes expressed in brain or testis and its evolutionary implications.</title>
        <authorList>
            <consortium name="International consortium for macaque cDNA sequencing and analysis"/>
        </authorList>
    </citation>
    <scope>NUCLEOTIDE SEQUENCE [LARGE SCALE MRNA]</scope>
    <source>
        <tissue>Testis</tissue>
    </source>
</reference>
<dbReference type="EMBL" id="AB168615">
    <property type="protein sequence ID" value="BAE00728.1"/>
    <property type="molecule type" value="mRNA"/>
</dbReference>
<dbReference type="RefSeq" id="NP_001270285.1">
    <property type="nucleotide sequence ID" value="NM_001283356.1"/>
</dbReference>
<dbReference type="RefSeq" id="XP_045232884.1">
    <property type="nucleotide sequence ID" value="XM_045376949.2"/>
</dbReference>
<dbReference type="RefSeq" id="XP_045232885.1">
    <property type="nucleotide sequence ID" value="XM_045376950.2"/>
</dbReference>
<dbReference type="RefSeq" id="XP_045232886.1">
    <property type="nucleotide sequence ID" value="XM_045376951.2"/>
</dbReference>
<dbReference type="RefSeq" id="XP_045232887.1">
    <property type="nucleotide sequence ID" value="XM_045376952.2"/>
</dbReference>
<dbReference type="RefSeq" id="XP_045232888.1">
    <property type="nucleotide sequence ID" value="XM_045376953.2"/>
</dbReference>
<dbReference type="RefSeq" id="XP_065389202.1">
    <property type="nucleotide sequence ID" value="XM_065533130.1"/>
</dbReference>
<dbReference type="SMR" id="Q4R844"/>
<dbReference type="STRING" id="9541.ENSMFAP00000015359"/>
<dbReference type="GeneID" id="101865000"/>
<dbReference type="VEuPathDB" id="HostDB:ENSMFAG00000030905"/>
<dbReference type="eggNOG" id="KOG0381">
    <property type="taxonomic scope" value="Eukaryota"/>
</dbReference>
<dbReference type="OMA" id="PHSANEV"/>
<dbReference type="Proteomes" id="UP000233100">
    <property type="component" value="Chromosome 17"/>
</dbReference>
<dbReference type="GO" id="GO:0005694">
    <property type="term" value="C:chromosome"/>
    <property type="evidence" value="ECO:0007669"/>
    <property type="project" value="UniProtKB-SubCell"/>
</dbReference>
<dbReference type="GO" id="GO:0005793">
    <property type="term" value="C:endoplasmic reticulum-Golgi intermediate compartment"/>
    <property type="evidence" value="ECO:0007669"/>
    <property type="project" value="UniProtKB-SubCell"/>
</dbReference>
<dbReference type="GO" id="GO:0005768">
    <property type="term" value="C:endosome"/>
    <property type="evidence" value="ECO:0007669"/>
    <property type="project" value="UniProtKB-SubCell"/>
</dbReference>
<dbReference type="GO" id="GO:0005576">
    <property type="term" value="C:extracellular region"/>
    <property type="evidence" value="ECO:0007669"/>
    <property type="project" value="UniProtKB-SubCell"/>
</dbReference>
<dbReference type="GO" id="GO:0005634">
    <property type="term" value="C:nucleus"/>
    <property type="evidence" value="ECO:0007669"/>
    <property type="project" value="UniProtKB-SubCell"/>
</dbReference>
<dbReference type="GO" id="GO:0005886">
    <property type="term" value="C:plasma membrane"/>
    <property type="evidence" value="ECO:0007669"/>
    <property type="project" value="UniProtKB-SubCell"/>
</dbReference>
<dbReference type="GO" id="GO:0000405">
    <property type="term" value="F:bubble DNA binding"/>
    <property type="evidence" value="ECO:0000250"/>
    <property type="project" value="AgBase"/>
</dbReference>
<dbReference type="GO" id="GO:0008301">
    <property type="term" value="F:DNA binding, bending"/>
    <property type="evidence" value="ECO:0000250"/>
    <property type="project" value="AgBase"/>
</dbReference>
<dbReference type="GO" id="GO:0000400">
    <property type="term" value="F:four-way junction DNA binding"/>
    <property type="evidence" value="ECO:0000250"/>
    <property type="project" value="AgBase"/>
</dbReference>
<dbReference type="GO" id="GO:0097100">
    <property type="term" value="F:supercoiled DNA binding"/>
    <property type="evidence" value="ECO:0000250"/>
    <property type="project" value="AgBase"/>
</dbReference>
<dbReference type="GO" id="GO:0002250">
    <property type="term" value="P:adaptive immune response"/>
    <property type="evidence" value="ECO:0007669"/>
    <property type="project" value="UniProtKB-KW"/>
</dbReference>
<dbReference type="GO" id="GO:0006914">
    <property type="term" value="P:autophagy"/>
    <property type="evidence" value="ECO:0007669"/>
    <property type="project" value="UniProtKB-KW"/>
</dbReference>
<dbReference type="GO" id="GO:0006935">
    <property type="term" value="P:chemotaxis"/>
    <property type="evidence" value="ECO:0007669"/>
    <property type="project" value="UniProtKB-KW"/>
</dbReference>
<dbReference type="GO" id="GO:0032392">
    <property type="term" value="P:DNA geometric change"/>
    <property type="evidence" value="ECO:0000250"/>
    <property type="project" value="AgBase"/>
</dbReference>
<dbReference type="GO" id="GO:0006310">
    <property type="term" value="P:DNA recombination"/>
    <property type="evidence" value="ECO:0007669"/>
    <property type="project" value="UniProtKB-KW"/>
</dbReference>
<dbReference type="GO" id="GO:0006281">
    <property type="term" value="P:DNA repair"/>
    <property type="evidence" value="ECO:0007669"/>
    <property type="project" value="UniProtKB-KW"/>
</dbReference>
<dbReference type="GO" id="GO:0006954">
    <property type="term" value="P:inflammatory response"/>
    <property type="evidence" value="ECO:0007669"/>
    <property type="project" value="UniProtKB-KW"/>
</dbReference>
<dbReference type="GO" id="GO:0045087">
    <property type="term" value="P:innate immune response"/>
    <property type="evidence" value="ECO:0007669"/>
    <property type="project" value="UniProtKB-KW"/>
</dbReference>
<dbReference type="GO" id="GO:0006357">
    <property type="term" value="P:regulation of transcription by RNA polymerase II"/>
    <property type="evidence" value="ECO:0007669"/>
    <property type="project" value="TreeGrafter"/>
</dbReference>
<dbReference type="CDD" id="cd21978">
    <property type="entry name" value="HMG-box_HMGB_rpt1"/>
    <property type="match status" value="1"/>
</dbReference>
<dbReference type="CDD" id="cd21979">
    <property type="entry name" value="HMG-box_HMGB_rpt2"/>
    <property type="match status" value="1"/>
</dbReference>
<dbReference type="FunFam" id="1.10.30.10:FF:000006">
    <property type="entry name" value="High mobility group protein B1"/>
    <property type="match status" value="1"/>
</dbReference>
<dbReference type="FunFam" id="1.10.30.10:FF:000015">
    <property type="entry name" value="high mobility group protein B1"/>
    <property type="match status" value="1"/>
</dbReference>
<dbReference type="Gene3D" id="1.10.30.10">
    <property type="entry name" value="High mobility group box domain"/>
    <property type="match status" value="2"/>
</dbReference>
<dbReference type="InterPro" id="IPR009071">
    <property type="entry name" value="HMG_box_dom"/>
</dbReference>
<dbReference type="InterPro" id="IPR036910">
    <property type="entry name" value="HMG_box_dom_sf"/>
</dbReference>
<dbReference type="InterPro" id="IPR017967">
    <property type="entry name" value="HMG_boxA_CS"/>
</dbReference>
<dbReference type="InterPro" id="IPR050342">
    <property type="entry name" value="HMGB"/>
</dbReference>
<dbReference type="PANTHER" id="PTHR48112:SF35">
    <property type="entry name" value="HIGH MOBILITY GROUP PROTEIN B1"/>
    <property type="match status" value="1"/>
</dbReference>
<dbReference type="PANTHER" id="PTHR48112">
    <property type="entry name" value="HIGH MOBILITY GROUP PROTEIN DSP1"/>
    <property type="match status" value="1"/>
</dbReference>
<dbReference type="Pfam" id="PF00505">
    <property type="entry name" value="HMG_box"/>
    <property type="match status" value="1"/>
</dbReference>
<dbReference type="Pfam" id="PF09011">
    <property type="entry name" value="HMG_box_2"/>
    <property type="match status" value="1"/>
</dbReference>
<dbReference type="PRINTS" id="PR00886">
    <property type="entry name" value="HIGHMOBLTY12"/>
</dbReference>
<dbReference type="SMART" id="SM00398">
    <property type="entry name" value="HMG"/>
    <property type="match status" value="2"/>
</dbReference>
<dbReference type="SUPFAM" id="SSF47095">
    <property type="entry name" value="HMG-box"/>
    <property type="match status" value="2"/>
</dbReference>
<dbReference type="PROSITE" id="PS00353">
    <property type="entry name" value="HMG_BOX_1"/>
    <property type="match status" value="1"/>
</dbReference>
<dbReference type="PROSITE" id="PS50118">
    <property type="entry name" value="HMG_BOX_2"/>
    <property type="match status" value="2"/>
</dbReference>
<accession>Q4R844</accession>
<gene>
    <name type="primary">HMGB1</name>
    <name type="synonym">HMG1</name>
    <name type="ORF">QtsA-13487</name>
</gene>
<feature type="chain" id="PRO_0000048527" description="High mobility group protein B1">
    <location>
        <begin position="1"/>
        <end position="215"/>
    </location>
</feature>
<feature type="DNA-binding region" description="HMG box 1" evidence="5">
    <location>
        <begin position="9"/>
        <end position="79"/>
    </location>
</feature>
<feature type="DNA-binding region" description="HMG box 2" evidence="5">
    <location>
        <begin position="95"/>
        <end position="163"/>
    </location>
</feature>
<feature type="region of interest" description="Sufficient for interaction with HAVCR2" evidence="3">
    <location>
        <begin position="1"/>
        <end position="97"/>
    </location>
</feature>
<feature type="region of interest" description="LPS binding (delipidated)" evidence="1">
    <location>
        <begin position="3"/>
        <end position="15"/>
    </location>
</feature>
<feature type="region of interest" description="NLS 1" evidence="4">
    <location>
        <begin position="27"/>
        <end position="43"/>
    </location>
</feature>
<feature type="region of interest" description="Disordered" evidence="6">
    <location>
        <begin position="76"/>
        <end position="95"/>
    </location>
</feature>
<feature type="region of interest" description="LPS binding (Lipid A)" evidence="1">
    <location>
        <begin position="80"/>
        <end position="96"/>
    </location>
</feature>
<feature type="region of interest" description="Cytokine-stimulating activity" evidence="1">
    <location>
        <begin position="89"/>
        <end position="108"/>
    </location>
</feature>
<feature type="region of interest" description="Binding to AGER/RAGE" evidence="4">
    <location>
        <begin position="150"/>
        <end position="183"/>
    </location>
</feature>
<feature type="region of interest" description="Disordered" evidence="6">
    <location>
        <begin position="161"/>
        <end position="215"/>
    </location>
</feature>
<feature type="region of interest" description="NLS 2" evidence="4">
    <location>
        <begin position="178"/>
        <end position="184"/>
    </location>
</feature>
<feature type="short sequence motif" description="Nuclear localization signal (NLS) 1" evidence="4">
    <location>
        <begin position="27"/>
        <end position="43"/>
    </location>
</feature>
<feature type="short sequence motif" description="Nuclear localization signal (NLS) 2" evidence="4">
    <location>
        <begin position="178"/>
        <end position="184"/>
    </location>
</feature>
<feature type="compositionally biased region" description="Basic and acidic residues" evidence="6">
    <location>
        <begin position="83"/>
        <end position="94"/>
    </location>
</feature>
<feature type="compositionally biased region" description="Basic and acidic residues" evidence="6">
    <location>
        <begin position="161"/>
        <end position="179"/>
    </location>
</feature>
<feature type="compositionally biased region" description="Acidic residues" evidence="6">
    <location>
        <begin position="187"/>
        <end position="215"/>
    </location>
</feature>
<feature type="binding site" evidence="2">
    <location>
        <begin position="1"/>
        <end position="10"/>
    </location>
    <ligand>
        <name>heparin</name>
        <dbReference type="ChEBI" id="CHEBI:28304"/>
    </ligand>
</feature>
<feature type="site" description="Cleavage; by thrombin:thrombomodulin" evidence="2">
    <location>
        <begin position="10"/>
        <end position="11"/>
    </location>
</feature>
<feature type="site" description="Cleavage; by CASP1" evidence="1">
    <location>
        <begin position="67"/>
        <end position="68"/>
    </location>
</feature>
<feature type="modified residue" description="N6-acetyllysine" evidence="2">
    <location>
        <position position="3"/>
    </location>
</feature>
<feature type="modified residue" description="N6-acetyllysine" evidence="2">
    <location>
        <position position="7"/>
    </location>
</feature>
<feature type="modified residue" description="N6-acetyllysine" evidence="2">
    <location>
        <position position="8"/>
    </location>
</feature>
<feature type="modified residue" description="N6-acetyllysine" evidence="2">
    <location>
        <position position="12"/>
    </location>
</feature>
<feature type="modified residue" description="Cysteine sulfonic acid (-SO3H); alternate" evidence="4">
    <location>
        <position position="23"/>
    </location>
</feature>
<feature type="modified residue" description="N6-acetyllysine" evidence="2">
    <location>
        <position position="28"/>
    </location>
</feature>
<feature type="modified residue" description="N6-acetyllysine" evidence="2">
    <location>
        <position position="29"/>
    </location>
</feature>
<feature type="modified residue" description="N6-acetyllysine" evidence="2">
    <location>
        <position position="30"/>
    </location>
</feature>
<feature type="modified residue" description="Phosphoserine" evidence="1">
    <location>
        <position position="35"/>
    </location>
</feature>
<feature type="modified residue" description="N6-acetyllysine" evidence="3">
    <location>
        <position position="43"/>
    </location>
</feature>
<feature type="modified residue" description="Cysteine sulfonic acid (-SO3H); alternate" evidence="4">
    <location>
        <position position="45"/>
    </location>
</feature>
<feature type="modified residue" description="N6-acetyllysine" evidence="3">
    <location>
        <position position="90"/>
    </location>
</feature>
<feature type="modified residue" description="Phosphoserine" evidence="1">
    <location>
        <position position="100"/>
    </location>
</feature>
<feature type="modified residue" description="Cysteine sulfonic acid (-SO3H)" evidence="4">
    <location>
        <position position="106"/>
    </location>
</feature>
<feature type="modified residue" description="N6-acetyllysine" evidence="2">
    <location>
        <position position="127"/>
    </location>
</feature>
<feature type="modified residue" description="N6-acetyllysine" evidence="2">
    <location>
        <position position="128"/>
    </location>
</feature>
<feature type="modified residue" description="N6-acetyllysine" evidence="3">
    <location>
        <position position="141"/>
    </location>
</feature>
<feature type="modified residue" description="N6-acetyllysine" evidence="2">
    <location>
        <position position="172"/>
    </location>
</feature>
<feature type="modified residue" description="N6-acetyllysine" evidence="2">
    <location>
        <position position="173"/>
    </location>
</feature>
<feature type="modified residue" description="N6-acetyllysine" evidence="2">
    <location>
        <position position="177"/>
    </location>
</feature>
<feature type="modified residue" description="N6-acetyllysine" evidence="2">
    <location>
        <position position="180"/>
    </location>
</feature>
<feature type="modified residue" description="ADP-ribosylserine" evidence="1">
    <location>
        <position position="181"/>
    </location>
</feature>
<feature type="modified residue" description="N6-acetyllysine" evidence="2">
    <location>
        <position position="182"/>
    </location>
</feature>
<feature type="modified residue" description="N6-acetyllysine" evidence="2">
    <location>
        <position position="183"/>
    </location>
</feature>
<feature type="modified residue" description="N6-acetyllysine" evidence="2">
    <location>
        <position position="184"/>
    </location>
</feature>
<feature type="modified residue" description="N6-acetyllysine" evidence="2">
    <location>
        <position position="185"/>
    </location>
</feature>
<feature type="disulfide bond" description="In disulfide HMGB1; alternate" evidence="4">
    <location>
        <begin position="23"/>
        <end position="45"/>
    </location>
</feature>
<feature type="cross-link" description="Isoglutamyl lysine isopeptide (Lys-Gln) (interchain with Q-?)" evidence="1">
    <location>
        <position position="28"/>
    </location>
</feature>
<feature type="cross-link" description="Isoglutamyl lysine isopeptide (Lys-Gln) (interchain with Q-?)" evidence="1">
    <location>
        <position position="43"/>
    </location>
</feature>
<feature type="cross-link" description="Isoglutamyl lysine isopeptide (Lys-Gln) (interchain with Q-?)" evidence="1">
    <location>
        <position position="44"/>
    </location>
</feature>
<feature type="cross-link" description="Isoglutamyl lysine isopeptide (Lys-Gln) (interchain with Q-?)" evidence="1">
    <location>
        <position position="68"/>
    </location>
</feature>
<feature type="cross-link" description="Isoglutamyl lysine isopeptide (Lys-Gln) (interchain with Q-?)" evidence="1">
    <location>
        <position position="180"/>
    </location>
</feature>
<feature type="cross-link" description="Isoglutamyl lysine isopeptide (Lys-Gln) (interchain with Q-?)" evidence="1">
    <location>
        <position position="182"/>
    </location>
</feature>
<feature type="cross-link" description="Isoglutamyl lysine isopeptide (Lys-Gln) (interchain with Q-?)" evidence="1">
    <location>
        <position position="183"/>
    </location>
</feature>
<feature type="cross-link" description="Isoglutamyl lysine isopeptide (Lys-Gln) (interchain with Q-?)" evidence="1">
    <location>
        <position position="184"/>
    </location>
</feature>
<protein>
    <recommendedName>
        <fullName>High mobility group protein B1</fullName>
    </recommendedName>
    <alternativeName>
        <fullName>High mobility group protein 1</fullName>
        <shortName>HMG-1</shortName>
    </alternativeName>
</protein>
<evidence type="ECO:0000250" key="1">
    <source>
        <dbReference type="UniProtKB" id="P09429"/>
    </source>
</evidence>
<evidence type="ECO:0000250" key="2">
    <source>
        <dbReference type="UniProtKB" id="P10103"/>
    </source>
</evidence>
<evidence type="ECO:0000250" key="3">
    <source>
        <dbReference type="UniProtKB" id="P63158"/>
    </source>
</evidence>
<evidence type="ECO:0000250" key="4">
    <source>
        <dbReference type="UniProtKB" id="P63159"/>
    </source>
</evidence>
<evidence type="ECO:0000255" key="5">
    <source>
        <dbReference type="PROSITE-ProRule" id="PRU00267"/>
    </source>
</evidence>
<evidence type="ECO:0000256" key="6">
    <source>
        <dbReference type="SAM" id="MobiDB-lite"/>
    </source>
</evidence>
<evidence type="ECO:0000305" key="7"/>
<comment type="function">
    <text evidence="1 2 4">Multifunctional redox sensitive protein with various roles in different cellular compartments. In the nucleus is one of the major chromatin-associated non-histone proteins and acts as a DNA chaperone involved in replication, transcription, chromatin remodeling, V(D)J recombination, DNA repair and genome stability. Proposed to be an universal biosensor for nucleic acids. Promotes host inflammatory response to sterile and infectious signals and is involved in the coordination and integration of innate and adaptive immune responses. In the cytoplasm functions as a sensor and/or chaperone for immunogenic nucleic acids implicating the activation of TLR9-mediated immune responses, and mediates autophagy. Acts as a danger-associated molecular pattern (DAMP) molecule that amplifies immune responses during tissue injury. Released to the extracellular environment can bind DNA, nucleosomes, IL-1 beta, CXCL12, AGER isoform 2/sRAGE, lipopolysaccharide (LPS) and lipoteichoic acid (LTA), and activates cells through engagement of multiple surface receptors. In the extracellular compartment fully reduced HMGB1 (released by necrosis) acts as a chemokine, disulfide HMGB1 (actively secreted) as a cytokine, and sulfonyl HMGB1 (released from apoptotic cells) promotes immunological tolerance. Has proangiogenic activity. May be involved in platelet activation. Binds to phosphatidylserine and phosphatidylethanolamide. Bound to RAGE mediates signaling for neuronal outgrowth. May play a role in accumulation of expanded polyglutamine (polyQ) proteins.</text>
</comment>
<comment type="function">
    <text evidence="1 2 3 4">Nuclear functions are attributed to fully reduced HGMB1. Associates with chromatin and binds DNA with a preference to non-canonical DNA structures such as single-stranded DNA, DNA-containing cruciforms or bent structures, supercoiled DNA and ZDNA. Can bent DNA and enhance DNA flexibility by looping thus providing a mechanism to promote activities on various gene promoters by enhancing transcription factor binding and/or bringing distant regulatory sequences into close proximity. May be involved in nucleotide excision repair (NER), mismatch repair (MMR) and base excision repair (BER) pathways, and double strand break repair such as non-homologous end joining (NHEJ). Involved in V(D)J recombination by acting as a cofactor of the RAG complex: acts by stimulating cleavage and RAG protein binding at the 23 bp spacer of conserved recombination signal sequences (RSS). In vitro can displace histone H1 from highly bent DNA. Can restructure the canonical nucleosome leading to relaxation of structural constraints for transcription factor-binding. Enhances binding of sterol regulatory element-binding proteins (SREBPs) such as SREBF1 to their cognate DNA sequences and increases their transcriptional activities. Facilitates binding of TP53 to DNA. May be involved in mitochondrial quality control and autophagy in a transcription-dependent fashion implicating HSPB1. Can modulate the activity of the telomerase complex and may be involved in telomere maintenance.</text>
</comment>
<comment type="function">
    <text evidence="1 3">In the cytoplasm proposed to dissociate the BECN1:BCL2 complex via competitive interaction with BECN1 leading to autophagy activation. Can protect BECN1 and ATG5 from calpain-mediated cleavage and thus proposed to control their proautophagic and proapoptotic functions and to regulate the extent and severity of inflammation-associated cellular injury. In myeloid cells has a protective role against endotoxemia and bacterial infection by promoting autophagy. Involved in endosomal translocation and activation of TLR9 in response to CpG-DNA in macrophages.</text>
</comment>
<comment type="function">
    <text evidence="1 2 3 4">In the extracellular compartment (following either active secretion or passive release) involved in regulation of the inflammatory response. Fully reduced HGMB1 (which subsequently gets oxidized after release) in association with CXCL12 mediates the recruitment of inflammatory cells during the initial phase of tissue injury; the CXCL12:HMGB1 complex triggers CXCR4 homodimerization. Induces the migration of monocyte-derived immature dendritic cells and seems to regulate adhesive and migratory functions of neutrophils implicating AGER/RAGE and ITGAM. Can bind to various types of DNA and RNA including microbial unmethylated CpG-DNA to enhance the innate immune response to nucleic acids. Proposed to act in promiscuous DNA/RNA sensing which cooperates with subsequent discriminative sensing by specific pattern recognition receptors. Promotes extracellular DNA-induced AIM2 inflammasome activation implicating AGER/RAGE. Disulfide HMGB1 binds to transmembrane receptors, such as AGER/RAGE, TLR2, TLR4 and probably TREM1, thus activating their signal transduction pathways. Mediates the release of cytokines/chemokines such as TNF, IL-1, IL-6, IL-8, CCL2, CCL3, CCL4 and CXCL10. Promotes secretion of interferon-gamma by macrophage-stimulated natural killer (NK) cells in concert with other cytokines like IL-2 or IL-12. TLR4 is proposed to be the primary receptor promoting macrophage activation and signaling through TLR4 seems to implicate LY96/MD-2. In bacterial LPS- or LTA-mediated inflammatory responses binds to the endotoxins and transfers them to CD14 for signaling to the respective TLR4:LY96 and TLR2 complexes. Contributes to tumor proliferation by association with ACER/RAGE. Can bind to IL1-beta and signals through the IL1R1:IL1RAP receptor complex. Binding to class A CpG activates cytokine production in plasmacytoid dendritic cells implicating TLR9, MYD88 and AGER/RAGE and can activate autoreactive B cells. Via HMGB1-containing chromatin immune complexes may also promote B cell responses to endogenous TLR9 ligands through a B-cell receptor (BCR)-dependent and ACER/RAGE-independent mechanism. Inhibits phagocytosis of apoptotic cells by macrophages; the function is dependent on poly-ADP-ribosylation and involves binding to phosphatidylserine on the cell surface of apoptotic cells. In adaptive immunity may be involved in enhancing immunity through activation of effector T-cells and suppression of regulatory T (TReg) cells. In contrast, without implicating effector or regulatory T-cells, required for tumor infiltration and activation of T-cells expressing the lymphotoxin LTA:LTB heterotrimer thus promoting tumor malignant progression. Also reported to limit proliferation of T-cells. Released HMGB1:nucleosome complexes formed during apoptosis can signal through TLR2 to induce cytokine production. Involved in induction of immunological tolerance by apoptotic cells; its pro-inflammatory activities when released by apoptotic cells are neutralized by reactive oxygen species (ROS)-dependent oxidation specifically on Cys-106. During macrophage activation by activated lymphocyte-derived self apoptotic DNA (ALD-DNA) promotes recruitment of ALD-DNA to endosomes.</text>
</comment>
<comment type="subunit">
    <text evidence="1 3 4">Interacts (fully reduced HMGB1) with CXCL12; probably in a 1:2 ratio involving two molecules of CXCL12, each interacting with one HMG box of HMGB1; inhibited by glycyrrhizin. Associates with the TLR4:LY96 receptor complex. Component of the RAG complex composed of core components RAG1 and RAG2, and associated component HMGB1 or HMGB2. Interacts (in cytoplasm upon starvation) with BECN1; inhibits the interaction of BECN1 and BCL2 leading to promotion of autophagy. Interacts with KPNA1; involved in nuclear import. Interacts with SREBF1, TLR2, TLR4, TLR9, PTPRZ1, APEX1, FEN1, POLB, TERT. Interacts with IL1B, AGER, MSH2, XPA, XPC, HNF1A, TP53. Interacts with CD24; the probable CD24:SIGLEC10 complex is proposed to inhibit HGMB1-mediated tissue damage immune response. Interacts with THBD; prevents HGMB1 interaction with ACER/RAGE and inhibits HGMB1 pro-inflammatory activity. Interacts with HAVCR2; impairs HMGB1 binding to B-DNA and likely HMGB1-mediated innate immune response. Interacts with XPO1; mediating nuclear export. Interacts with receptor RAGE/AGER (By similarity).</text>
</comment>
<comment type="subcellular location">
    <subcellularLocation>
        <location evidence="1">Nucleus</location>
    </subcellularLocation>
    <subcellularLocation>
        <location evidence="2 4">Chromosome</location>
    </subcellularLocation>
    <subcellularLocation>
        <location evidence="1">Cytoplasm</location>
    </subcellularLocation>
    <subcellularLocation>
        <location evidence="1 3">Secreted</location>
    </subcellularLocation>
    <subcellularLocation>
        <location evidence="1 3 4">Cell membrane</location>
        <topology evidence="1 3 4">Peripheral membrane protein</topology>
        <orientation evidence="1 3 4">Extracellular side</orientation>
    </subcellularLocation>
    <subcellularLocation>
        <location evidence="3">Endosome</location>
    </subcellularLocation>
    <subcellularLocation>
        <location evidence="3">Endoplasmic reticulum-Golgi intermediate compartment</location>
    </subcellularLocation>
    <text evidence="1 3">In basal state predominantly nuclear. Shuttles between the cytoplasm and the nucleus. Translocates from the nucleus to the cytoplasm upon autophagy stimulation. Release from macrophages in the extracellular milieu requires the activation of NLRC4 or NLRP3 inflammasomes (By similarity). Passively released to the extracellular milieu from necrotic cells by diffusion, involving the fully reduced HGMB1 which subsequently gets oxidized. Also released from apoptotic cells. Active secretion from a variety of immune and non-immune cells such as macrophages, monocytes, neutrophils, dendritic cells, natural killer cells and plasma cells in response to various stimuli such as LPS and cytokines involves a nonconventional secretory process via secretory lysosomes. Found on the surface of activated platelets.</text>
</comment>
<comment type="domain">
    <text evidence="1">HMG box 2 mediates pro-inflammatory cytokine-stimulating activity and binding to TLR4. However, not involved in mediating immunogenic activity in the context of apoptosis-induced immune tolerance.</text>
</comment>
<comment type="domain">
    <text evidence="1 4">The acidic C-terminal domain forms a flexible structure which can reversibly interact intramolecularily with the HMG boxes and modulate binding to DNA and other proteins.</text>
</comment>
<comment type="PTM">
    <text evidence="1">Phosphorylated at serine residues. Phosphorylation in both NLS regions is required for cytoplasmic translocation followed by secretion.</text>
</comment>
<comment type="PTM">
    <text evidence="1 2 4">Acetylated on multiple sites upon stimulation with LPS (By similarity). Acetylation on lysine residues in the nuclear localization signals (NLS 1 and NLS 2) leads to cytoplasmic localization and subsequent secretion. Acetylation on Lys-3 results in preferential binding to DNA ends and impairs DNA bending activity (By similarity).</text>
</comment>
<comment type="PTM">
    <text evidence="1">Reduction/oxidation of cysteine residues Cys-23, Cys-45 and Cys-106 and a possible intramolecular disulfide bond involving Cys-23 and Cys-45 give rise to different redox forms with specific functional activities in various cellular compartments: 1- fully reduced HMGB1 (HMGB1C23hC45hC106h), 2- disulfide HMGB1 (HMGB1C23-C45C106h) and 3- sulfonyl HMGB1 (HMGB1C23soC45soC106so).</text>
</comment>
<comment type="PTM">
    <text evidence="3">Poly-ADP-ribosylated by PARP1 when secreted following stimulation with LPS (By similarity).</text>
</comment>
<comment type="PTM">
    <text evidence="1 2">In vitro cleavage by CASP1 is liberating a HMG box 1-containing peptide which may mediate immunogenic activity; the peptide antagonizes apoptosis-induced immune tolerance. Can be proteolytically cleaved by a thrombin:thrombomodulin complex; reduces binding to heparin and pro-inflammatory activities (By similarity).</text>
</comment>
<comment type="PTM">
    <text evidence="1">Forms covalent cross-links mediated by transglutaminase TGM2, between a glutamine and the epsilon-amino group of a lysine residue, forming homopolymers and heteropolymers.</text>
</comment>
<comment type="similarity">
    <text evidence="7">Belongs to the HMGB family.</text>
</comment>
<name>HMGB1_MACFA</name>
<proteinExistence type="evidence at transcript level"/>
<sequence>MGKGDPKKPRGKMSSYAFFVQTCREEHKKKHPDASVNFSEFSKKCSERWKTMSAKEKGKFEDMAKADKARYEREMKTYIPPKGETKKKFKDPNAPKRPPSAFFLFCSEYRPKIKGEHPGLSIGDVAKKLGEMWNNTAADDKQPYEKKAAKLKEKYEKDIAAYRAKGKPDAAKKGVVKAEKSKKKKEEEEDEEDEEDEEEEEDEEDEDEEEDDDDE</sequence>